<reference key="1">
    <citation type="journal article" date="2002" name="Genome Res.">
        <title>The genome of Methanosarcina acetivorans reveals extensive metabolic and physiological diversity.</title>
        <authorList>
            <person name="Galagan J.E."/>
            <person name="Nusbaum C."/>
            <person name="Roy A."/>
            <person name="Endrizzi M.G."/>
            <person name="Macdonald P."/>
            <person name="FitzHugh W."/>
            <person name="Calvo S."/>
            <person name="Engels R."/>
            <person name="Smirnov S."/>
            <person name="Atnoor D."/>
            <person name="Brown A."/>
            <person name="Allen N."/>
            <person name="Naylor J."/>
            <person name="Stange-Thomann N."/>
            <person name="DeArellano K."/>
            <person name="Johnson R."/>
            <person name="Linton L."/>
            <person name="McEwan P."/>
            <person name="McKernan K."/>
            <person name="Talamas J."/>
            <person name="Tirrell A."/>
            <person name="Ye W."/>
            <person name="Zimmer A."/>
            <person name="Barber R.D."/>
            <person name="Cann I."/>
            <person name="Graham D.E."/>
            <person name="Grahame D.A."/>
            <person name="Guss A.M."/>
            <person name="Hedderich R."/>
            <person name="Ingram-Smith C."/>
            <person name="Kuettner H.C."/>
            <person name="Krzycki J.A."/>
            <person name="Leigh J.A."/>
            <person name="Li W."/>
            <person name="Liu J."/>
            <person name="Mukhopadhyay B."/>
            <person name="Reeve J.N."/>
            <person name="Smith K."/>
            <person name="Springer T.A."/>
            <person name="Umayam L.A."/>
            <person name="White O."/>
            <person name="White R.H."/>
            <person name="de Macario E.C."/>
            <person name="Ferry J.G."/>
            <person name="Jarrell K.F."/>
            <person name="Jing H."/>
            <person name="Macario A.J.L."/>
            <person name="Paulsen I.T."/>
            <person name="Pritchett M."/>
            <person name="Sowers K.R."/>
            <person name="Swanson R.V."/>
            <person name="Zinder S.H."/>
            <person name="Lander E."/>
            <person name="Metcalf W.W."/>
            <person name="Birren B."/>
        </authorList>
    </citation>
    <scope>NUCLEOTIDE SEQUENCE [LARGE SCALE GENOMIC DNA]</scope>
    <source>
        <strain>ATCC 35395 / DSM 2834 / JCM 12185 / C2A</strain>
    </source>
</reference>
<organism>
    <name type="scientific">Methanosarcina acetivorans (strain ATCC 35395 / DSM 2834 / JCM 12185 / C2A)</name>
    <dbReference type="NCBI Taxonomy" id="188937"/>
    <lineage>
        <taxon>Archaea</taxon>
        <taxon>Methanobacteriati</taxon>
        <taxon>Methanobacteriota</taxon>
        <taxon>Stenosarchaea group</taxon>
        <taxon>Methanomicrobia</taxon>
        <taxon>Methanosarcinales</taxon>
        <taxon>Methanosarcinaceae</taxon>
        <taxon>Methanosarcina</taxon>
    </lineage>
</organism>
<sequence length="408" mass="44285">MKVLVINAGSSSLKYQLIDMTNESPLAIGLCERIGIDNSIITQKRSDGKKLEKQTDLPNHKVALEEVVKALTDSELGVIKSMDEINAVGHRVVHGGEKFTSSALIDEGVEQAIKDCFELAPLHNPPNMMGITACQEIMPGVPMVAVFDTAFHQTIPAYAYMYALPYTLYEKYGIRKYGFHGTSHFYVARRAAAMLGKPEEEVKVITCHLGNGSSITAVNGGKSVETTMGFTPLEGVAMGTRCGSIDPAVVPFVMEKEGLTTREIDTLMNKKSGVLGVSGLSNDFRDLDEAASKGNQRAELALEIFAYKIKKVIGEYSAVLNGADAVVFTAGIGENSASIRKRILSGLDGLGIEIDEEKNKIRGQEIDISTPDAKVRVLVIPTNEELTIARDTKEICETEVKLRRSVSI</sequence>
<dbReference type="EC" id="2.7.2.1" evidence="1"/>
<dbReference type="EMBL" id="AE010299">
    <property type="protein sequence ID" value="AAM06961.1"/>
    <property type="molecule type" value="Genomic_DNA"/>
</dbReference>
<dbReference type="RefSeq" id="WP_011023514.1">
    <property type="nucleotide sequence ID" value="NC_003552.1"/>
</dbReference>
<dbReference type="SMR" id="Q8TK19"/>
<dbReference type="STRING" id="188937.MA_3606"/>
<dbReference type="EnsemblBacteria" id="AAM06961">
    <property type="protein sequence ID" value="AAM06961"/>
    <property type="gene ID" value="MA_3606"/>
</dbReference>
<dbReference type="GeneID" id="1475499"/>
<dbReference type="KEGG" id="mac:MA_3606"/>
<dbReference type="HOGENOM" id="CLU_020352_0_1_2"/>
<dbReference type="InParanoid" id="Q8TK19"/>
<dbReference type="OrthoDB" id="131495at2157"/>
<dbReference type="PhylomeDB" id="Q8TK19"/>
<dbReference type="UniPathway" id="UPA00340">
    <property type="reaction ID" value="UER00458"/>
</dbReference>
<dbReference type="Proteomes" id="UP000002487">
    <property type="component" value="Chromosome"/>
</dbReference>
<dbReference type="GO" id="GO:0005737">
    <property type="term" value="C:cytoplasm"/>
    <property type="evidence" value="ECO:0007669"/>
    <property type="project" value="UniProtKB-SubCell"/>
</dbReference>
<dbReference type="GO" id="GO:0008776">
    <property type="term" value="F:acetate kinase activity"/>
    <property type="evidence" value="ECO:0000318"/>
    <property type="project" value="GO_Central"/>
</dbReference>
<dbReference type="GO" id="GO:0005524">
    <property type="term" value="F:ATP binding"/>
    <property type="evidence" value="ECO:0007669"/>
    <property type="project" value="UniProtKB-KW"/>
</dbReference>
<dbReference type="GO" id="GO:0000287">
    <property type="term" value="F:magnesium ion binding"/>
    <property type="evidence" value="ECO:0007669"/>
    <property type="project" value="UniProtKB-UniRule"/>
</dbReference>
<dbReference type="GO" id="GO:0006083">
    <property type="term" value="P:acetate metabolic process"/>
    <property type="evidence" value="ECO:0000318"/>
    <property type="project" value="GO_Central"/>
</dbReference>
<dbReference type="GO" id="GO:0006085">
    <property type="term" value="P:acetyl-CoA biosynthetic process"/>
    <property type="evidence" value="ECO:0007669"/>
    <property type="project" value="UniProtKB-UniRule"/>
</dbReference>
<dbReference type="CDD" id="cd24010">
    <property type="entry name" value="ASKHA_NBD_AcK_PK"/>
    <property type="match status" value="1"/>
</dbReference>
<dbReference type="Gene3D" id="3.30.420.40">
    <property type="match status" value="2"/>
</dbReference>
<dbReference type="HAMAP" id="MF_00020">
    <property type="entry name" value="Acetate_kinase"/>
    <property type="match status" value="1"/>
</dbReference>
<dbReference type="InterPro" id="IPR004372">
    <property type="entry name" value="Ac/propionate_kinase"/>
</dbReference>
<dbReference type="InterPro" id="IPR000890">
    <property type="entry name" value="Aliphatic_acid_kin_short-chain"/>
</dbReference>
<dbReference type="InterPro" id="IPR023865">
    <property type="entry name" value="Aliphatic_acid_kinase_CS"/>
</dbReference>
<dbReference type="InterPro" id="IPR043129">
    <property type="entry name" value="ATPase_NBD"/>
</dbReference>
<dbReference type="NCBIfam" id="TIGR00016">
    <property type="entry name" value="ackA"/>
    <property type="match status" value="1"/>
</dbReference>
<dbReference type="PANTHER" id="PTHR21060">
    <property type="entry name" value="ACETATE KINASE"/>
    <property type="match status" value="1"/>
</dbReference>
<dbReference type="PANTHER" id="PTHR21060:SF15">
    <property type="entry name" value="ACETATE KINASE-RELATED"/>
    <property type="match status" value="1"/>
</dbReference>
<dbReference type="Pfam" id="PF00871">
    <property type="entry name" value="Acetate_kinase"/>
    <property type="match status" value="1"/>
</dbReference>
<dbReference type="PIRSF" id="PIRSF000722">
    <property type="entry name" value="Acetate_prop_kin"/>
    <property type="match status" value="1"/>
</dbReference>
<dbReference type="PRINTS" id="PR00471">
    <property type="entry name" value="ACETATEKNASE"/>
</dbReference>
<dbReference type="SUPFAM" id="SSF53067">
    <property type="entry name" value="Actin-like ATPase domain"/>
    <property type="match status" value="2"/>
</dbReference>
<dbReference type="PROSITE" id="PS01075">
    <property type="entry name" value="ACETATE_KINASE_1"/>
    <property type="match status" value="1"/>
</dbReference>
<dbReference type="PROSITE" id="PS01076">
    <property type="entry name" value="ACETATE_KINASE_2"/>
    <property type="match status" value="1"/>
</dbReference>
<comment type="function">
    <text evidence="1">Catalyzes the formation of acetyl phosphate from acetate and ATP. Can also catalyze the reverse reaction.</text>
</comment>
<comment type="catalytic activity">
    <reaction evidence="1">
        <text>acetate + ATP = acetyl phosphate + ADP</text>
        <dbReference type="Rhea" id="RHEA:11352"/>
        <dbReference type="ChEBI" id="CHEBI:22191"/>
        <dbReference type="ChEBI" id="CHEBI:30089"/>
        <dbReference type="ChEBI" id="CHEBI:30616"/>
        <dbReference type="ChEBI" id="CHEBI:456216"/>
        <dbReference type="EC" id="2.7.2.1"/>
    </reaction>
</comment>
<comment type="cofactor">
    <cofactor evidence="1">
        <name>Mg(2+)</name>
        <dbReference type="ChEBI" id="CHEBI:18420"/>
    </cofactor>
    <cofactor evidence="1">
        <name>Mn(2+)</name>
        <dbReference type="ChEBI" id="CHEBI:29035"/>
    </cofactor>
    <text evidence="1">Mg(2+). Can also accept Mn(2+).</text>
</comment>
<comment type="pathway">
    <text evidence="1">Metabolic intermediate biosynthesis; acetyl-CoA biosynthesis; acetyl-CoA from acetate: step 1/2.</text>
</comment>
<comment type="subunit">
    <text evidence="1">Homodimer.</text>
</comment>
<comment type="subcellular location">
    <subcellularLocation>
        <location evidence="1">Cytoplasm</location>
    </subcellularLocation>
</comment>
<comment type="similarity">
    <text evidence="1">Belongs to the acetokinase family.</text>
</comment>
<proteinExistence type="inferred from homology"/>
<keyword id="KW-0067">ATP-binding</keyword>
<keyword id="KW-0963">Cytoplasm</keyword>
<keyword id="KW-0418">Kinase</keyword>
<keyword id="KW-0460">Magnesium</keyword>
<keyword id="KW-0479">Metal-binding</keyword>
<keyword id="KW-0547">Nucleotide-binding</keyword>
<keyword id="KW-1185">Reference proteome</keyword>
<keyword id="KW-0808">Transferase</keyword>
<accession>Q8TK19</accession>
<evidence type="ECO:0000255" key="1">
    <source>
        <dbReference type="HAMAP-Rule" id="MF_00020"/>
    </source>
</evidence>
<feature type="chain" id="PRO_0000107648" description="Acetate kinase">
    <location>
        <begin position="1"/>
        <end position="408"/>
    </location>
</feature>
<feature type="active site" description="Proton donor/acceptor" evidence="1">
    <location>
        <position position="148"/>
    </location>
</feature>
<feature type="binding site" evidence="1">
    <location>
        <position position="7"/>
    </location>
    <ligand>
        <name>Mg(2+)</name>
        <dbReference type="ChEBI" id="CHEBI:18420"/>
    </ligand>
</feature>
<feature type="binding site" evidence="1">
    <location>
        <position position="14"/>
    </location>
    <ligand>
        <name>ATP</name>
        <dbReference type="ChEBI" id="CHEBI:30616"/>
    </ligand>
</feature>
<feature type="binding site" evidence="1">
    <location>
        <position position="91"/>
    </location>
    <ligand>
        <name>substrate</name>
    </ligand>
</feature>
<feature type="binding site" evidence="1">
    <location>
        <begin position="208"/>
        <end position="212"/>
    </location>
    <ligand>
        <name>ATP</name>
        <dbReference type="ChEBI" id="CHEBI:30616"/>
    </ligand>
</feature>
<feature type="binding site" evidence="1">
    <location>
        <begin position="283"/>
        <end position="285"/>
    </location>
    <ligand>
        <name>ATP</name>
        <dbReference type="ChEBI" id="CHEBI:30616"/>
    </ligand>
</feature>
<feature type="binding site" evidence="1">
    <location>
        <begin position="331"/>
        <end position="335"/>
    </location>
    <ligand>
        <name>ATP</name>
        <dbReference type="ChEBI" id="CHEBI:30616"/>
    </ligand>
</feature>
<feature type="binding site" evidence="1">
    <location>
        <position position="384"/>
    </location>
    <ligand>
        <name>Mg(2+)</name>
        <dbReference type="ChEBI" id="CHEBI:18420"/>
    </ligand>
</feature>
<feature type="site" description="Transition state stabilizer" evidence="1">
    <location>
        <position position="180"/>
    </location>
</feature>
<feature type="site" description="Transition state stabilizer" evidence="1">
    <location>
        <position position="241"/>
    </location>
</feature>
<gene>
    <name evidence="1" type="primary">ackA</name>
    <name type="synonym">ack</name>
    <name type="ordered locus">MA_3606</name>
</gene>
<protein>
    <recommendedName>
        <fullName evidence="1">Acetate kinase</fullName>
        <ecNumber evidence="1">2.7.2.1</ecNumber>
    </recommendedName>
    <alternativeName>
        <fullName evidence="1">Acetokinase</fullName>
    </alternativeName>
</protein>
<name>ACKA_METAC</name>